<evidence type="ECO:0000256" key="1">
    <source>
        <dbReference type="SAM" id="MobiDB-lite"/>
    </source>
</evidence>
<name>RTP1_TRYBG</name>
<feature type="chain" id="PRO_0000097520" description="Retrotransposable element SLACS 45 kDa protein">
    <location>
        <begin position="1"/>
        <end position="404"/>
    </location>
</feature>
<feature type="zinc finger region" description="C2H2-type">
    <location>
        <begin position="300"/>
        <end position="321"/>
    </location>
</feature>
<feature type="region of interest" description="Disordered" evidence="1">
    <location>
        <begin position="1"/>
        <end position="62"/>
    </location>
</feature>
<feature type="region of interest" description="Disordered" evidence="1">
    <location>
        <begin position="86"/>
        <end position="111"/>
    </location>
</feature>
<feature type="region of interest" description="Disordered" evidence="1">
    <location>
        <begin position="134"/>
        <end position="251"/>
    </location>
</feature>
<feature type="region of interest" description="Disordered" evidence="1">
    <location>
        <begin position="317"/>
        <end position="341"/>
    </location>
</feature>
<feature type="region of interest" description="Disordered" evidence="1">
    <location>
        <begin position="369"/>
        <end position="404"/>
    </location>
</feature>
<feature type="compositionally biased region" description="Polar residues" evidence="1">
    <location>
        <begin position="1"/>
        <end position="11"/>
    </location>
</feature>
<feature type="compositionally biased region" description="Polar residues" evidence="1">
    <location>
        <begin position="29"/>
        <end position="41"/>
    </location>
</feature>
<feature type="compositionally biased region" description="Basic and acidic residues" evidence="1">
    <location>
        <begin position="98"/>
        <end position="111"/>
    </location>
</feature>
<feature type="compositionally biased region" description="Polar residues" evidence="1">
    <location>
        <begin position="141"/>
        <end position="151"/>
    </location>
</feature>
<feature type="compositionally biased region" description="Basic and acidic residues" evidence="1">
    <location>
        <begin position="395"/>
        <end position="404"/>
    </location>
</feature>
<reference key="1">
    <citation type="journal article" date="1990" name="Nucleic Acids Res.">
        <title>SLACS retrotransposon from Trypanosoma brucei gambiense is similar to mammalian LINEs.</title>
        <authorList>
            <person name="Aksoy S."/>
            <person name="Williams S."/>
            <person name="Chang S."/>
            <person name="Richards F.F."/>
        </authorList>
    </citation>
    <scope>NUCLEOTIDE SEQUENCE [GENOMIC DNA]</scope>
</reference>
<protein>
    <recommendedName>
        <fullName>Retrotransposable element SLACS 45 kDa protein</fullName>
    </recommendedName>
    <alternativeName>
        <fullName>ORF1</fullName>
    </alternativeName>
</protein>
<keyword id="KW-0238">DNA-binding</keyword>
<keyword id="KW-0479">Metal-binding</keyword>
<keyword id="KW-0814">Transposable element</keyword>
<keyword id="KW-0862">Zinc</keyword>
<keyword id="KW-0863">Zinc-finger</keyword>
<sequence length="404" mass="45463">MVRNLRSSEPQKISRFPRHHGEGKKASSPALNLQWPGQKQVASAVAPEMRKRAPPKNNNTSIHRNCRKHLRKEGDWWIVEGGQNHKKAAHSPLKTKPVNKEGNRKKYGRPPREVEGKWLTSLIAATTEAVLRQLGKGKSPTAHTKSNQSRVPLQHSEKTAKGIKYATPQPKKKAHEQRKELPHWPPTKRSHGANKGQGAPVRAPAKTQGKGEEQPHTMRTWAQVAAPKKQKVTSKPPMAQKKKAQGEKKGAAANPFHWELQVEQLLKDAEQIRESMYIRFLHVRQSWWSTCFKAHMEFHCPVCGFAHPEETITVTHCRQQHPGGPPDSLHPDNNRESGAVSQVPPAHFRRWWLSSHIWRKRKISTLLSPKLPVPEQGDYPNARSGIGTGAPHSPHHCDRSAGPP</sequence>
<organism>
    <name type="scientific">Trypanosoma brucei gambiense</name>
    <dbReference type="NCBI Taxonomy" id="31285"/>
    <lineage>
        <taxon>Eukaryota</taxon>
        <taxon>Discoba</taxon>
        <taxon>Euglenozoa</taxon>
        <taxon>Kinetoplastea</taxon>
        <taxon>Metakinetoplastina</taxon>
        <taxon>Trypanosomatida</taxon>
        <taxon>Trypanosomatidae</taxon>
        <taxon>Trypanosoma</taxon>
    </lineage>
</organism>
<proteinExistence type="predicted"/>
<accession>P15593</accession>
<dbReference type="EMBL" id="X17078">
    <property type="protein sequence ID" value="CAA34930.1"/>
    <property type="molecule type" value="Genomic_DNA"/>
</dbReference>
<dbReference type="PIR" id="S14915">
    <property type="entry name" value="S14915"/>
</dbReference>
<dbReference type="GO" id="GO:0003677">
    <property type="term" value="F:DNA binding"/>
    <property type="evidence" value="ECO:0007669"/>
    <property type="project" value="UniProtKB-KW"/>
</dbReference>
<dbReference type="GO" id="GO:0008270">
    <property type="term" value="F:zinc ion binding"/>
    <property type="evidence" value="ECO:0007669"/>
    <property type="project" value="UniProtKB-KW"/>
</dbReference>